<sequence length="101" mass="10950">MFVKKGDKVRVIAGKDKGVEAVVVTALPKVNKVIVEGVNIVKKHQKSNSENPQGAIVEKEAPIHVSNVQVLDKNGVAGRVGYKFVDGKKVRYNKKSGEVLD</sequence>
<gene>
    <name evidence="1" type="primary">rplX</name>
    <name type="ordered locus">SSU05_0082</name>
</gene>
<proteinExistence type="inferred from homology"/>
<keyword id="KW-0687">Ribonucleoprotein</keyword>
<keyword id="KW-0689">Ribosomal protein</keyword>
<keyword id="KW-0694">RNA-binding</keyword>
<keyword id="KW-0699">rRNA-binding</keyword>
<dbReference type="EMBL" id="CP000407">
    <property type="protein sequence ID" value="ABP89054.1"/>
    <property type="molecule type" value="Genomic_DNA"/>
</dbReference>
<dbReference type="SMR" id="A4VSG5"/>
<dbReference type="STRING" id="391295.SSU05_0082"/>
<dbReference type="KEGG" id="ssu:SSU05_0082"/>
<dbReference type="eggNOG" id="COG0198">
    <property type="taxonomic scope" value="Bacteria"/>
</dbReference>
<dbReference type="HOGENOM" id="CLU_093315_2_0_9"/>
<dbReference type="GO" id="GO:1990904">
    <property type="term" value="C:ribonucleoprotein complex"/>
    <property type="evidence" value="ECO:0007669"/>
    <property type="project" value="UniProtKB-KW"/>
</dbReference>
<dbReference type="GO" id="GO:0005840">
    <property type="term" value="C:ribosome"/>
    <property type="evidence" value="ECO:0007669"/>
    <property type="project" value="UniProtKB-KW"/>
</dbReference>
<dbReference type="GO" id="GO:0019843">
    <property type="term" value="F:rRNA binding"/>
    <property type="evidence" value="ECO:0007669"/>
    <property type="project" value="UniProtKB-UniRule"/>
</dbReference>
<dbReference type="GO" id="GO:0003735">
    <property type="term" value="F:structural constituent of ribosome"/>
    <property type="evidence" value="ECO:0007669"/>
    <property type="project" value="InterPro"/>
</dbReference>
<dbReference type="GO" id="GO:0006412">
    <property type="term" value="P:translation"/>
    <property type="evidence" value="ECO:0007669"/>
    <property type="project" value="UniProtKB-UniRule"/>
</dbReference>
<dbReference type="CDD" id="cd06089">
    <property type="entry name" value="KOW_RPL26"/>
    <property type="match status" value="1"/>
</dbReference>
<dbReference type="FunFam" id="2.30.30.30:FF:000004">
    <property type="entry name" value="50S ribosomal protein L24"/>
    <property type="match status" value="1"/>
</dbReference>
<dbReference type="Gene3D" id="2.30.30.30">
    <property type="match status" value="1"/>
</dbReference>
<dbReference type="HAMAP" id="MF_01326_B">
    <property type="entry name" value="Ribosomal_uL24_B"/>
    <property type="match status" value="1"/>
</dbReference>
<dbReference type="InterPro" id="IPR005824">
    <property type="entry name" value="KOW"/>
</dbReference>
<dbReference type="InterPro" id="IPR014722">
    <property type="entry name" value="Rib_uL2_dom2"/>
</dbReference>
<dbReference type="InterPro" id="IPR003256">
    <property type="entry name" value="Ribosomal_uL24"/>
</dbReference>
<dbReference type="InterPro" id="IPR005825">
    <property type="entry name" value="Ribosomal_uL24_CS"/>
</dbReference>
<dbReference type="InterPro" id="IPR041988">
    <property type="entry name" value="Ribosomal_uL24_KOW"/>
</dbReference>
<dbReference type="InterPro" id="IPR008991">
    <property type="entry name" value="Translation_prot_SH3-like_sf"/>
</dbReference>
<dbReference type="NCBIfam" id="TIGR01079">
    <property type="entry name" value="rplX_bact"/>
    <property type="match status" value="1"/>
</dbReference>
<dbReference type="PANTHER" id="PTHR12903">
    <property type="entry name" value="MITOCHONDRIAL RIBOSOMAL PROTEIN L24"/>
    <property type="match status" value="1"/>
</dbReference>
<dbReference type="Pfam" id="PF00467">
    <property type="entry name" value="KOW"/>
    <property type="match status" value="1"/>
</dbReference>
<dbReference type="Pfam" id="PF17136">
    <property type="entry name" value="ribosomal_L24"/>
    <property type="match status" value="1"/>
</dbReference>
<dbReference type="SMART" id="SM00739">
    <property type="entry name" value="KOW"/>
    <property type="match status" value="1"/>
</dbReference>
<dbReference type="SUPFAM" id="SSF50104">
    <property type="entry name" value="Translation proteins SH3-like domain"/>
    <property type="match status" value="1"/>
</dbReference>
<dbReference type="PROSITE" id="PS01108">
    <property type="entry name" value="RIBOSOMAL_L24"/>
    <property type="match status" value="1"/>
</dbReference>
<organism>
    <name type="scientific">Streptococcus suis (strain 05ZYH33)</name>
    <dbReference type="NCBI Taxonomy" id="391295"/>
    <lineage>
        <taxon>Bacteria</taxon>
        <taxon>Bacillati</taxon>
        <taxon>Bacillota</taxon>
        <taxon>Bacilli</taxon>
        <taxon>Lactobacillales</taxon>
        <taxon>Streptococcaceae</taxon>
        <taxon>Streptococcus</taxon>
    </lineage>
</organism>
<accession>A4VSG5</accession>
<feature type="chain" id="PRO_1000052327" description="Large ribosomal subunit protein uL24">
    <location>
        <begin position="1"/>
        <end position="101"/>
    </location>
</feature>
<protein>
    <recommendedName>
        <fullName evidence="1">Large ribosomal subunit protein uL24</fullName>
    </recommendedName>
    <alternativeName>
        <fullName evidence="2">50S ribosomal protein L24</fullName>
    </alternativeName>
</protein>
<evidence type="ECO:0000255" key="1">
    <source>
        <dbReference type="HAMAP-Rule" id="MF_01326"/>
    </source>
</evidence>
<evidence type="ECO:0000305" key="2"/>
<name>RL24_STRSY</name>
<comment type="function">
    <text evidence="1">One of two assembly initiator proteins, it binds directly to the 5'-end of the 23S rRNA, where it nucleates assembly of the 50S subunit.</text>
</comment>
<comment type="function">
    <text evidence="1">One of the proteins that surrounds the polypeptide exit tunnel on the outside of the subunit.</text>
</comment>
<comment type="subunit">
    <text evidence="1">Part of the 50S ribosomal subunit.</text>
</comment>
<comment type="similarity">
    <text evidence="1">Belongs to the universal ribosomal protein uL24 family.</text>
</comment>
<reference key="1">
    <citation type="journal article" date="2007" name="PLoS ONE">
        <title>A glimpse of streptococcal toxic shock syndrome from comparative genomics of S. suis 2 Chinese isolates.</title>
        <authorList>
            <person name="Chen C."/>
            <person name="Tang J."/>
            <person name="Dong W."/>
            <person name="Wang C."/>
            <person name="Feng Y."/>
            <person name="Wang J."/>
            <person name="Zheng F."/>
            <person name="Pan X."/>
            <person name="Liu D."/>
            <person name="Li M."/>
            <person name="Song Y."/>
            <person name="Zhu X."/>
            <person name="Sun H."/>
            <person name="Feng T."/>
            <person name="Guo Z."/>
            <person name="Ju A."/>
            <person name="Ge J."/>
            <person name="Dong Y."/>
            <person name="Sun W."/>
            <person name="Jiang Y."/>
            <person name="Wang J."/>
            <person name="Yan J."/>
            <person name="Yang H."/>
            <person name="Wang X."/>
            <person name="Gao G.F."/>
            <person name="Yang R."/>
            <person name="Wang J."/>
            <person name="Yu J."/>
        </authorList>
    </citation>
    <scope>NUCLEOTIDE SEQUENCE [LARGE SCALE GENOMIC DNA]</scope>
    <source>
        <strain>05ZYH33</strain>
    </source>
</reference>